<comment type="function">
    <text>The periplasmic linker protein component of an antibiotic efflux pump. Confers resistance to numerous structurally unrelated antibiotics such as carbenicillin, chloramphenicol, erythromycin, novobiocin, streptomycin and tetracycline. Is not involved in organic solvent efflux.</text>
</comment>
<comment type="subcellular location">
    <subcellularLocation>
        <location evidence="4">Cell inner membrane</location>
        <topology evidence="2">Lipid-anchor</topology>
    </subcellularLocation>
</comment>
<comment type="induction">
    <text evidence="3">The arpABC operon was not seen to be induced by carbenicillin, chloramphenicol, erythromycin nor by hexane, toluene or p-xylene.</text>
</comment>
<comment type="similarity">
    <text evidence="4">Belongs to the membrane fusion protein (MFP) (TC 8.A.1) family.</text>
</comment>
<comment type="caution">
    <text evidence="4">Despite being nearly identical to the ttgABC operon in strain DOT-T1E and the mepABC operon in strain KT2442-TOL this operon does not function in solvent efflux. This may be due to different protein expression levels. In strain KT2440 the equivalent operon does not seem to function in toluene efflux.</text>
</comment>
<sequence length="371" mass="40277">MQFKPAVTALVSAVALATLLSGCKKEEAAPAAQAPQVGVVTIQPQAFTLTSELPGRTSAYRVAEVRPQVNGIILKRLFKEGSEVKEGQQLYQIDPAVYEATLANAKANLLATRSLAERYKQLIDEQAVSKQEYDDANAKRLQAEASLKSAQIDLRYTKVLAPISGRIGRSSFTEGALVSNGQTDAMATIQQLDPIYVDVTQSTAELLKLRRDLESGQLQKAGNNAASVQLVLEDGSLFKQEGRLEFSEVAVDETTGSVTLRALFPNPDHTLLPGMFVHARLKAGVNANAILAPQQGVTRDLKGAPTALVVNQENKVELRQLKASRTLGSDWLIEEGLNPGDRLITEGLQYVSPRRRGEGQRCHQRQEAGRP</sequence>
<gene>
    <name type="primary">arpA</name>
</gene>
<feature type="signal peptide" evidence="2">
    <location>
        <begin position="1"/>
        <end position="22"/>
    </location>
</feature>
<feature type="chain" id="PRO_0000018689" description="Antibiotic efflux pump periplasmic linker protein ArpA">
    <location>
        <begin position="23"/>
        <end position="371"/>
    </location>
</feature>
<feature type="coiled-coil region" evidence="1">
    <location>
        <begin position="115"/>
        <end position="155"/>
    </location>
</feature>
<feature type="lipid moiety-binding region" description="N-palmitoyl cysteine" evidence="2">
    <location>
        <position position="23"/>
    </location>
</feature>
<feature type="lipid moiety-binding region" description="S-diacylglycerol cysteine" evidence="2">
    <location>
        <position position="23"/>
    </location>
</feature>
<keyword id="KW-0046">Antibiotic resistance</keyword>
<keyword id="KW-0997">Cell inner membrane</keyword>
<keyword id="KW-1003">Cell membrane</keyword>
<keyword id="KW-0175">Coiled coil</keyword>
<keyword id="KW-0449">Lipoprotein</keyword>
<keyword id="KW-0472">Membrane</keyword>
<keyword id="KW-0564">Palmitate</keyword>
<keyword id="KW-0732">Signal</keyword>
<keyword id="KW-0813">Transport</keyword>
<accession>Q9KJC3</accession>
<evidence type="ECO:0000255" key="1"/>
<evidence type="ECO:0000255" key="2">
    <source>
        <dbReference type="PROSITE-ProRule" id="PRU00303"/>
    </source>
</evidence>
<evidence type="ECO:0000269" key="3">
    <source>
    </source>
</evidence>
<evidence type="ECO:0000305" key="4"/>
<reference key="1">
    <citation type="journal article" date="2001" name="Microbiology">
        <title>Identification and molecular characterization of an efflux system involved in Pseudomonas putida S12 multidrug resistance.</title>
        <authorList>
            <person name="Kieboom J."/>
            <person name="de Bont J.A.M."/>
        </authorList>
    </citation>
    <scope>NUCLEOTIDE SEQUENCE [GENOMIC DNA]</scope>
    <scope>EFFLUX PUMP SUBSTRATES</scope>
    <scope>INDUCTION</scope>
    <source>
        <strain>ATCC 700801 / S12</strain>
    </source>
</reference>
<protein>
    <recommendedName>
        <fullName>Antibiotic efflux pump periplasmic linker protein ArpA</fullName>
    </recommendedName>
</protein>
<proteinExistence type="evidence at transcript level"/>
<dbReference type="EMBL" id="AF183959">
    <property type="protein sequence ID" value="AAF73831.1"/>
    <property type="molecule type" value="Genomic_DNA"/>
</dbReference>
<dbReference type="SMR" id="Q9KJC3"/>
<dbReference type="GO" id="GO:0005886">
    <property type="term" value="C:plasma membrane"/>
    <property type="evidence" value="ECO:0007669"/>
    <property type="project" value="UniProtKB-SubCell"/>
</dbReference>
<dbReference type="GO" id="GO:0022857">
    <property type="term" value="F:transmembrane transporter activity"/>
    <property type="evidence" value="ECO:0007669"/>
    <property type="project" value="InterPro"/>
</dbReference>
<dbReference type="GO" id="GO:0046677">
    <property type="term" value="P:response to antibiotic"/>
    <property type="evidence" value="ECO:0007669"/>
    <property type="project" value="UniProtKB-KW"/>
</dbReference>
<dbReference type="FunFam" id="2.40.420.20:FF:000001">
    <property type="entry name" value="Efflux RND transporter periplasmic adaptor subunit"/>
    <property type="match status" value="1"/>
</dbReference>
<dbReference type="FunFam" id="2.40.30.170:FF:000001">
    <property type="entry name" value="Multidrug resistance efflux transporter MdtE"/>
    <property type="match status" value="1"/>
</dbReference>
<dbReference type="Gene3D" id="2.40.30.170">
    <property type="match status" value="1"/>
</dbReference>
<dbReference type="Gene3D" id="2.40.420.20">
    <property type="match status" value="1"/>
</dbReference>
<dbReference type="Gene3D" id="2.40.50.100">
    <property type="match status" value="1"/>
</dbReference>
<dbReference type="Gene3D" id="1.10.287.470">
    <property type="entry name" value="Helix hairpin bin"/>
    <property type="match status" value="1"/>
</dbReference>
<dbReference type="InterPro" id="IPR043602">
    <property type="entry name" value="CusB-like_dom_1"/>
</dbReference>
<dbReference type="InterPro" id="IPR032317">
    <property type="entry name" value="CusB_D23"/>
</dbReference>
<dbReference type="InterPro" id="IPR051160">
    <property type="entry name" value="MFP_Efflux"/>
</dbReference>
<dbReference type="InterPro" id="IPR006143">
    <property type="entry name" value="RND_pump_MFP"/>
</dbReference>
<dbReference type="NCBIfam" id="TIGR01730">
    <property type="entry name" value="RND_mfp"/>
    <property type="match status" value="1"/>
</dbReference>
<dbReference type="PANTHER" id="PTHR30158">
    <property type="entry name" value="ACRA/E-RELATED COMPONENT OF DRUG EFFLUX TRANSPORTER"/>
    <property type="match status" value="1"/>
</dbReference>
<dbReference type="PANTHER" id="PTHR30158:SF3">
    <property type="entry name" value="MULTIDRUG EFFLUX PUMP SUBUNIT ACRA-RELATED"/>
    <property type="match status" value="1"/>
</dbReference>
<dbReference type="Pfam" id="PF00529">
    <property type="entry name" value="CusB_dom_1"/>
    <property type="match status" value="1"/>
</dbReference>
<dbReference type="Pfam" id="PF16576">
    <property type="entry name" value="HlyD_D23"/>
    <property type="match status" value="1"/>
</dbReference>
<dbReference type="SUPFAM" id="SSF111369">
    <property type="entry name" value="HlyD-like secretion proteins"/>
    <property type="match status" value="1"/>
</dbReference>
<dbReference type="PROSITE" id="PS51257">
    <property type="entry name" value="PROKAR_LIPOPROTEIN"/>
    <property type="match status" value="1"/>
</dbReference>
<organism>
    <name type="scientific">Pseudomonas putida</name>
    <name type="common">Arthrobacter siderocapsulatus</name>
    <dbReference type="NCBI Taxonomy" id="303"/>
    <lineage>
        <taxon>Bacteria</taxon>
        <taxon>Pseudomonadati</taxon>
        <taxon>Pseudomonadota</taxon>
        <taxon>Gammaproteobacteria</taxon>
        <taxon>Pseudomonadales</taxon>
        <taxon>Pseudomonadaceae</taxon>
        <taxon>Pseudomonas</taxon>
    </lineage>
</organism>
<name>ARPA_PSEPU</name>